<proteinExistence type="inferred from homology"/>
<dbReference type="EC" id="6.1.1.7" evidence="1"/>
<dbReference type="EMBL" id="CP001078">
    <property type="protein sequence ID" value="ACD52710.1"/>
    <property type="molecule type" value="Genomic_DNA"/>
</dbReference>
<dbReference type="RefSeq" id="WP_003373213.1">
    <property type="nucleotide sequence ID" value="NC_010723.1"/>
</dbReference>
<dbReference type="SMR" id="B2V3W2"/>
<dbReference type="KEGG" id="cbt:CLH_1125"/>
<dbReference type="HOGENOM" id="CLU_004485_1_1_9"/>
<dbReference type="GO" id="GO:0005829">
    <property type="term" value="C:cytosol"/>
    <property type="evidence" value="ECO:0007669"/>
    <property type="project" value="TreeGrafter"/>
</dbReference>
<dbReference type="GO" id="GO:0004813">
    <property type="term" value="F:alanine-tRNA ligase activity"/>
    <property type="evidence" value="ECO:0007669"/>
    <property type="project" value="UniProtKB-UniRule"/>
</dbReference>
<dbReference type="GO" id="GO:0002161">
    <property type="term" value="F:aminoacyl-tRNA deacylase activity"/>
    <property type="evidence" value="ECO:0007669"/>
    <property type="project" value="TreeGrafter"/>
</dbReference>
<dbReference type="GO" id="GO:0005524">
    <property type="term" value="F:ATP binding"/>
    <property type="evidence" value="ECO:0007669"/>
    <property type="project" value="UniProtKB-UniRule"/>
</dbReference>
<dbReference type="GO" id="GO:0140096">
    <property type="term" value="F:catalytic activity, acting on a protein"/>
    <property type="evidence" value="ECO:0007669"/>
    <property type="project" value="UniProtKB-ARBA"/>
</dbReference>
<dbReference type="GO" id="GO:0016740">
    <property type="term" value="F:transferase activity"/>
    <property type="evidence" value="ECO:0007669"/>
    <property type="project" value="UniProtKB-ARBA"/>
</dbReference>
<dbReference type="GO" id="GO:0000049">
    <property type="term" value="F:tRNA binding"/>
    <property type="evidence" value="ECO:0007669"/>
    <property type="project" value="UniProtKB-KW"/>
</dbReference>
<dbReference type="GO" id="GO:0008270">
    <property type="term" value="F:zinc ion binding"/>
    <property type="evidence" value="ECO:0007669"/>
    <property type="project" value="UniProtKB-UniRule"/>
</dbReference>
<dbReference type="GO" id="GO:0006419">
    <property type="term" value="P:alanyl-tRNA aminoacylation"/>
    <property type="evidence" value="ECO:0007669"/>
    <property type="project" value="UniProtKB-UniRule"/>
</dbReference>
<dbReference type="CDD" id="cd00673">
    <property type="entry name" value="AlaRS_core"/>
    <property type="match status" value="1"/>
</dbReference>
<dbReference type="FunFam" id="3.10.310.40:FF:000001">
    <property type="entry name" value="Alanine--tRNA ligase"/>
    <property type="match status" value="1"/>
</dbReference>
<dbReference type="FunFam" id="3.30.54.20:FF:000001">
    <property type="entry name" value="Alanine--tRNA ligase"/>
    <property type="match status" value="1"/>
</dbReference>
<dbReference type="FunFam" id="3.30.930.10:FF:000004">
    <property type="entry name" value="Alanine--tRNA ligase"/>
    <property type="match status" value="1"/>
</dbReference>
<dbReference type="FunFam" id="3.30.980.10:FF:000004">
    <property type="entry name" value="Alanine--tRNA ligase, cytoplasmic"/>
    <property type="match status" value="1"/>
</dbReference>
<dbReference type="Gene3D" id="2.40.30.130">
    <property type="match status" value="1"/>
</dbReference>
<dbReference type="Gene3D" id="3.10.310.40">
    <property type="match status" value="1"/>
</dbReference>
<dbReference type="Gene3D" id="3.30.54.20">
    <property type="match status" value="1"/>
</dbReference>
<dbReference type="Gene3D" id="6.10.250.550">
    <property type="match status" value="1"/>
</dbReference>
<dbReference type="Gene3D" id="3.30.930.10">
    <property type="entry name" value="Bira Bifunctional Protein, Domain 2"/>
    <property type="match status" value="1"/>
</dbReference>
<dbReference type="Gene3D" id="3.30.980.10">
    <property type="entry name" value="Threonyl-trna Synthetase, Chain A, domain 2"/>
    <property type="match status" value="1"/>
</dbReference>
<dbReference type="HAMAP" id="MF_00036_B">
    <property type="entry name" value="Ala_tRNA_synth_B"/>
    <property type="match status" value="1"/>
</dbReference>
<dbReference type="InterPro" id="IPR045864">
    <property type="entry name" value="aa-tRNA-synth_II/BPL/LPL"/>
</dbReference>
<dbReference type="InterPro" id="IPR002318">
    <property type="entry name" value="Ala-tRNA-lgiase_IIc"/>
</dbReference>
<dbReference type="InterPro" id="IPR018162">
    <property type="entry name" value="Ala-tRNA-ligase_IIc_anticod-bd"/>
</dbReference>
<dbReference type="InterPro" id="IPR018165">
    <property type="entry name" value="Ala-tRNA-synth_IIc_core"/>
</dbReference>
<dbReference type="InterPro" id="IPR018164">
    <property type="entry name" value="Ala-tRNA-synth_IIc_N"/>
</dbReference>
<dbReference type="InterPro" id="IPR050058">
    <property type="entry name" value="Ala-tRNA_ligase"/>
</dbReference>
<dbReference type="InterPro" id="IPR023033">
    <property type="entry name" value="Ala_tRNA_ligase_euk/bac"/>
</dbReference>
<dbReference type="InterPro" id="IPR003156">
    <property type="entry name" value="DHHA1_dom"/>
</dbReference>
<dbReference type="InterPro" id="IPR018163">
    <property type="entry name" value="Thr/Ala-tRNA-synth_IIc_edit"/>
</dbReference>
<dbReference type="InterPro" id="IPR009000">
    <property type="entry name" value="Transl_B-barrel_sf"/>
</dbReference>
<dbReference type="InterPro" id="IPR012947">
    <property type="entry name" value="tRNA_SAD"/>
</dbReference>
<dbReference type="NCBIfam" id="TIGR00344">
    <property type="entry name" value="alaS"/>
    <property type="match status" value="1"/>
</dbReference>
<dbReference type="PANTHER" id="PTHR11777:SF9">
    <property type="entry name" value="ALANINE--TRNA LIGASE, CYTOPLASMIC"/>
    <property type="match status" value="1"/>
</dbReference>
<dbReference type="PANTHER" id="PTHR11777">
    <property type="entry name" value="ALANYL-TRNA SYNTHETASE"/>
    <property type="match status" value="1"/>
</dbReference>
<dbReference type="Pfam" id="PF02272">
    <property type="entry name" value="DHHA1"/>
    <property type="match status" value="1"/>
</dbReference>
<dbReference type="Pfam" id="PF01411">
    <property type="entry name" value="tRNA-synt_2c"/>
    <property type="match status" value="1"/>
</dbReference>
<dbReference type="Pfam" id="PF07973">
    <property type="entry name" value="tRNA_SAD"/>
    <property type="match status" value="1"/>
</dbReference>
<dbReference type="PRINTS" id="PR00980">
    <property type="entry name" value="TRNASYNTHALA"/>
</dbReference>
<dbReference type="SMART" id="SM00863">
    <property type="entry name" value="tRNA_SAD"/>
    <property type="match status" value="1"/>
</dbReference>
<dbReference type="SUPFAM" id="SSF55681">
    <property type="entry name" value="Class II aaRS and biotin synthetases"/>
    <property type="match status" value="1"/>
</dbReference>
<dbReference type="SUPFAM" id="SSF101353">
    <property type="entry name" value="Putative anticodon-binding domain of alanyl-tRNA synthetase (AlaRS)"/>
    <property type="match status" value="1"/>
</dbReference>
<dbReference type="SUPFAM" id="SSF55186">
    <property type="entry name" value="ThrRS/AlaRS common domain"/>
    <property type="match status" value="1"/>
</dbReference>
<dbReference type="SUPFAM" id="SSF50447">
    <property type="entry name" value="Translation proteins"/>
    <property type="match status" value="1"/>
</dbReference>
<dbReference type="PROSITE" id="PS50860">
    <property type="entry name" value="AA_TRNA_LIGASE_II_ALA"/>
    <property type="match status" value="1"/>
</dbReference>
<reference key="1">
    <citation type="submission" date="2008-05" db="EMBL/GenBank/DDBJ databases">
        <title>Complete genome sequence of Clostridium botulinum E3 str. Alaska E43.</title>
        <authorList>
            <person name="Brinkac L.M."/>
            <person name="Brown J.L."/>
            <person name="Bruce D."/>
            <person name="Detter C."/>
            <person name="Munk C."/>
            <person name="Smith L.A."/>
            <person name="Smith T.J."/>
            <person name="Sutton G."/>
            <person name="Brettin T.S."/>
        </authorList>
    </citation>
    <scope>NUCLEOTIDE SEQUENCE [LARGE SCALE GENOMIC DNA]</scope>
    <source>
        <strain>Alaska E43 / Type E3</strain>
    </source>
</reference>
<comment type="function">
    <text evidence="1">Catalyzes the attachment of alanine to tRNA(Ala) in a two-step reaction: alanine is first activated by ATP to form Ala-AMP and then transferred to the acceptor end of tRNA(Ala). Also edits incorrectly charged Ser-tRNA(Ala) and Gly-tRNA(Ala) via its editing domain.</text>
</comment>
<comment type="catalytic activity">
    <reaction evidence="1">
        <text>tRNA(Ala) + L-alanine + ATP = L-alanyl-tRNA(Ala) + AMP + diphosphate</text>
        <dbReference type="Rhea" id="RHEA:12540"/>
        <dbReference type="Rhea" id="RHEA-COMP:9657"/>
        <dbReference type="Rhea" id="RHEA-COMP:9923"/>
        <dbReference type="ChEBI" id="CHEBI:30616"/>
        <dbReference type="ChEBI" id="CHEBI:33019"/>
        <dbReference type="ChEBI" id="CHEBI:57972"/>
        <dbReference type="ChEBI" id="CHEBI:78442"/>
        <dbReference type="ChEBI" id="CHEBI:78497"/>
        <dbReference type="ChEBI" id="CHEBI:456215"/>
        <dbReference type="EC" id="6.1.1.7"/>
    </reaction>
</comment>
<comment type="cofactor">
    <cofactor evidence="1">
        <name>Zn(2+)</name>
        <dbReference type="ChEBI" id="CHEBI:29105"/>
    </cofactor>
    <text evidence="1">Binds 1 zinc ion per subunit.</text>
</comment>
<comment type="subcellular location">
    <subcellularLocation>
        <location evidence="1">Cytoplasm</location>
    </subcellularLocation>
</comment>
<comment type="domain">
    <text evidence="1">Consists of three domains; the N-terminal catalytic domain, the editing domain and the C-terminal C-Ala domain. The editing domain removes incorrectly charged amino acids, while the C-Ala domain, along with tRNA(Ala), serves as a bridge to cooperatively bring together the editing and aminoacylation centers thus stimulating deacylation of misacylated tRNAs.</text>
</comment>
<comment type="similarity">
    <text evidence="1">Belongs to the class-II aminoacyl-tRNA synthetase family.</text>
</comment>
<feature type="chain" id="PRO_0000347559" description="Alanine--tRNA ligase">
    <location>
        <begin position="1"/>
        <end position="879"/>
    </location>
</feature>
<feature type="binding site" evidence="1">
    <location>
        <position position="566"/>
    </location>
    <ligand>
        <name>Zn(2+)</name>
        <dbReference type="ChEBI" id="CHEBI:29105"/>
    </ligand>
</feature>
<feature type="binding site" evidence="1">
    <location>
        <position position="570"/>
    </location>
    <ligand>
        <name>Zn(2+)</name>
        <dbReference type="ChEBI" id="CHEBI:29105"/>
    </ligand>
</feature>
<feature type="binding site" evidence="1">
    <location>
        <position position="668"/>
    </location>
    <ligand>
        <name>Zn(2+)</name>
        <dbReference type="ChEBI" id="CHEBI:29105"/>
    </ligand>
</feature>
<feature type="binding site" evidence="1">
    <location>
        <position position="672"/>
    </location>
    <ligand>
        <name>Zn(2+)</name>
        <dbReference type="ChEBI" id="CHEBI:29105"/>
    </ligand>
</feature>
<name>SYA_CLOBA</name>
<accession>B2V3W2</accession>
<organism>
    <name type="scientific">Clostridium botulinum (strain Alaska E43 / Type E3)</name>
    <dbReference type="NCBI Taxonomy" id="508767"/>
    <lineage>
        <taxon>Bacteria</taxon>
        <taxon>Bacillati</taxon>
        <taxon>Bacillota</taxon>
        <taxon>Clostridia</taxon>
        <taxon>Eubacteriales</taxon>
        <taxon>Clostridiaceae</taxon>
        <taxon>Clostridium</taxon>
    </lineage>
</organism>
<keyword id="KW-0030">Aminoacyl-tRNA synthetase</keyword>
<keyword id="KW-0067">ATP-binding</keyword>
<keyword id="KW-0963">Cytoplasm</keyword>
<keyword id="KW-0436">Ligase</keyword>
<keyword id="KW-0479">Metal-binding</keyword>
<keyword id="KW-0547">Nucleotide-binding</keyword>
<keyword id="KW-0648">Protein biosynthesis</keyword>
<keyword id="KW-0694">RNA-binding</keyword>
<keyword id="KW-0820">tRNA-binding</keyword>
<keyword id="KW-0862">Zinc</keyword>
<sequence length="879" mass="98164">MKFTKTNDLRDAYLKFFESKDHLKLESFSLVPQNDKSLLLINAGMAPLKPYFTGLQEPPKKRITTCQKCVRTGDIDNVGITSRHGTFFEMLGNFSFGDYFKKEIIPWAWEFLTGVLELPKEKLYVTIYLDDDEAYEYWTTLTDVDKTHIFRLGKEDNFWEHGAGPCGPCTEIHFSRTDEVPTNSEKFVELSDEDKIIEVWNLVFTQFDGDGKGNYEKLASTNIDTGMGLERLAVVMQNKNSIFEIDTLENILKEVGNLANVKYGEDNKIDVSLRIITDHIRSITFMISDDIMPSNEGRGYVLRRLLRRAARHGKTLGIKDAFLCNLCDVVIRDCGSAYSDLEAKKDYIKKVIKIEEDKFRETLDSGMEILNNLISELKENNEKVLKGADGFKLYDTFGFPMELTKEILEDEDLSLDEDGFHKEMKEQRERARSARKTSNYMGTDVKTLDVISGEIETTFDGYENDSLIAEVKTLVNGEDFTNSIIEGNNAVVVTDVTPFYAEMGGQIGDTGTIYNDNFKGKVLDTKKNIGGKIIHFVEAISGELKVGDKVKLEVDNARRENIKRNHTATHLLDAALVKVLGSHVHQAGSYVSADRLRFDFSHFEGVKEEELLKVEQLVNEAIMSVTPVNTTEMDLQEAKNSGAVGIFDDKYAEKVRVVCAGEYSKELCGGTHIDNTGKIGLFKIISENGIAAGTRRIEAVTGIEAYKWVNEKAELLKHISGKLKCSEKEITIKLDQQSKEIKEKEKEITNLKSKFASMEINDIINSVKDVKGINVVTYALTDVDGEALRGLCEKVRDKVNNSLTLLTSSIDGKVVICAMADKEAVSKGAHCGKVIKEAATILGGGGGGRPDMAQAGGKLPEKISDALDSVYKIVETLVK</sequence>
<evidence type="ECO:0000255" key="1">
    <source>
        <dbReference type="HAMAP-Rule" id="MF_00036"/>
    </source>
</evidence>
<protein>
    <recommendedName>
        <fullName evidence="1">Alanine--tRNA ligase</fullName>
        <ecNumber evidence="1">6.1.1.7</ecNumber>
    </recommendedName>
    <alternativeName>
        <fullName evidence="1">Alanyl-tRNA synthetase</fullName>
        <shortName evidence="1">AlaRS</shortName>
    </alternativeName>
</protein>
<gene>
    <name evidence="1" type="primary">alaS</name>
    <name type="ordered locus">CLH_1125</name>
</gene>